<sequence>MEELKSIIRDIPDFPKKGIIFKDITTLLSDAASYQRMIDLLSHRYIGKRIDKVVGVEARGFIIGAALAYKLGAGIVLVRKPGKLPSETFKKTYDLEYGTDTLEMHTDAIKKGERVLIADDLLATGGTMSAVVDMVDSMGGELVECCFMAELEFLNGRTKLPVERVFSLLKF</sequence>
<dbReference type="EC" id="2.4.2.7" evidence="1"/>
<dbReference type="EMBL" id="CP001390">
    <property type="protein sequence ID" value="ACM21675.1"/>
    <property type="molecule type" value="Genomic_DNA"/>
</dbReference>
<dbReference type="RefSeq" id="WP_012648403.1">
    <property type="nucleotide sequence ID" value="NC_011979.1"/>
</dbReference>
<dbReference type="SMR" id="B9M4Z1"/>
<dbReference type="STRING" id="316067.Geob_3332"/>
<dbReference type="KEGG" id="geo:Geob_3332"/>
<dbReference type="eggNOG" id="COG0503">
    <property type="taxonomic scope" value="Bacteria"/>
</dbReference>
<dbReference type="HOGENOM" id="CLU_063339_3_0_7"/>
<dbReference type="OrthoDB" id="9803963at2"/>
<dbReference type="UniPathway" id="UPA00588">
    <property type="reaction ID" value="UER00646"/>
</dbReference>
<dbReference type="Proteomes" id="UP000007721">
    <property type="component" value="Chromosome"/>
</dbReference>
<dbReference type="GO" id="GO:0005737">
    <property type="term" value="C:cytoplasm"/>
    <property type="evidence" value="ECO:0007669"/>
    <property type="project" value="UniProtKB-SubCell"/>
</dbReference>
<dbReference type="GO" id="GO:0002055">
    <property type="term" value="F:adenine binding"/>
    <property type="evidence" value="ECO:0007669"/>
    <property type="project" value="TreeGrafter"/>
</dbReference>
<dbReference type="GO" id="GO:0003999">
    <property type="term" value="F:adenine phosphoribosyltransferase activity"/>
    <property type="evidence" value="ECO:0007669"/>
    <property type="project" value="UniProtKB-UniRule"/>
</dbReference>
<dbReference type="GO" id="GO:0016208">
    <property type="term" value="F:AMP binding"/>
    <property type="evidence" value="ECO:0007669"/>
    <property type="project" value="TreeGrafter"/>
</dbReference>
<dbReference type="GO" id="GO:0006168">
    <property type="term" value="P:adenine salvage"/>
    <property type="evidence" value="ECO:0007669"/>
    <property type="project" value="InterPro"/>
</dbReference>
<dbReference type="GO" id="GO:0044209">
    <property type="term" value="P:AMP salvage"/>
    <property type="evidence" value="ECO:0007669"/>
    <property type="project" value="UniProtKB-UniRule"/>
</dbReference>
<dbReference type="GO" id="GO:0006166">
    <property type="term" value="P:purine ribonucleoside salvage"/>
    <property type="evidence" value="ECO:0007669"/>
    <property type="project" value="UniProtKB-KW"/>
</dbReference>
<dbReference type="CDD" id="cd06223">
    <property type="entry name" value="PRTases_typeI"/>
    <property type="match status" value="1"/>
</dbReference>
<dbReference type="FunFam" id="3.40.50.2020:FF:000004">
    <property type="entry name" value="Adenine phosphoribosyltransferase"/>
    <property type="match status" value="1"/>
</dbReference>
<dbReference type="Gene3D" id="3.40.50.2020">
    <property type="match status" value="1"/>
</dbReference>
<dbReference type="HAMAP" id="MF_00004">
    <property type="entry name" value="Aden_phosphoribosyltr"/>
    <property type="match status" value="1"/>
</dbReference>
<dbReference type="InterPro" id="IPR005764">
    <property type="entry name" value="Ade_phspho_trans"/>
</dbReference>
<dbReference type="InterPro" id="IPR000836">
    <property type="entry name" value="PRibTrfase_dom"/>
</dbReference>
<dbReference type="InterPro" id="IPR029057">
    <property type="entry name" value="PRTase-like"/>
</dbReference>
<dbReference type="InterPro" id="IPR050054">
    <property type="entry name" value="UPRTase/APRTase"/>
</dbReference>
<dbReference type="NCBIfam" id="TIGR01090">
    <property type="entry name" value="apt"/>
    <property type="match status" value="1"/>
</dbReference>
<dbReference type="NCBIfam" id="NF002634">
    <property type="entry name" value="PRK02304.1-3"/>
    <property type="match status" value="1"/>
</dbReference>
<dbReference type="NCBIfam" id="NF002636">
    <property type="entry name" value="PRK02304.1-5"/>
    <property type="match status" value="1"/>
</dbReference>
<dbReference type="PANTHER" id="PTHR32315">
    <property type="entry name" value="ADENINE PHOSPHORIBOSYLTRANSFERASE"/>
    <property type="match status" value="1"/>
</dbReference>
<dbReference type="PANTHER" id="PTHR32315:SF3">
    <property type="entry name" value="ADENINE PHOSPHORIBOSYLTRANSFERASE"/>
    <property type="match status" value="1"/>
</dbReference>
<dbReference type="Pfam" id="PF00156">
    <property type="entry name" value="Pribosyltran"/>
    <property type="match status" value="1"/>
</dbReference>
<dbReference type="SUPFAM" id="SSF53271">
    <property type="entry name" value="PRTase-like"/>
    <property type="match status" value="1"/>
</dbReference>
<keyword id="KW-0963">Cytoplasm</keyword>
<keyword id="KW-0328">Glycosyltransferase</keyword>
<keyword id="KW-0660">Purine salvage</keyword>
<keyword id="KW-1185">Reference proteome</keyword>
<keyword id="KW-0808">Transferase</keyword>
<protein>
    <recommendedName>
        <fullName evidence="1">Adenine phosphoribosyltransferase</fullName>
        <shortName evidence="1">APRT</shortName>
        <ecNumber evidence="1">2.4.2.7</ecNumber>
    </recommendedName>
</protein>
<feature type="chain" id="PRO_1000116245" description="Adenine phosphoribosyltransferase">
    <location>
        <begin position="1"/>
        <end position="171"/>
    </location>
</feature>
<gene>
    <name evidence="1" type="primary">apt</name>
    <name type="ordered locus">Geob_3332</name>
</gene>
<proteinExistence type="inferred from homology"/>
<organism>
    <name type="scientific">Geotalea daltonii (strain DSM 22248 / JCM 15807 / FRC-32)</name>
    <name type="common">Geobacter daltonii</name>
    <dbReference type="NCBI Taxonomy" id="316067"/>
    <lineage>
        <taxon>Bacteria</taxon>
        <taxon>Pseudomonadati</taxon>
        <taxon>Thermodesulfobacteriota</taxon>
        <taxon>Desulfuromonadia</taxon>
        <taxon>Geobacterales</taxon>
        <taxon>Geobacteraceae</taxon>
        <taxon>Geotalea</taxon>
    </lineage>
</organism>
<name>APT_GEODF</name>
<comment type="function">
    <text evidence="1">Catalyzes a salvage reaction resulting in the formation of AMP, that is energically less costly than de novo synthesis.</text>
</comment>
<comment type="catalytic activity">
    <reaction evidence="1">
        <text>AMP + diphosphate = 5-phospho-alpha-D-ribose 1-diphosphate + adenine</text>
        <dbReference type="Rhea" id="RHEA:16609"/>
        <dbReference type="ChEBI" id="CHEBI:16708"/>
        <dbReference type="ChEBI" id="CHEBI:33019"/>
        <dbReference type="ChEBI" id="CHEBI:58017"/>
        <dbReference type="ChEBI" id="CHEBI:456215"/>
        <dbReference type="EC" id="2.4.2.7"/>
    </reaction>
</comment>
<comment type="pathway">
    <text evidence="1">Purine metabolism; AMP biosynthesis via salvage pathway; AMP from adenine: step 1/1.</text>
</comment>
<comment type="subunit">
    <text evidence="1">Homodimer.</text>
</comment>
<comment type="subcellular location">
    <subcellularLocation>
        <location evidence="1">Cytoplasm</location>
    </subcellularLocation>
</comment>
<comment type="similarity">
    <text evidence="1">Belongs to the purine/pyrimidine phosphoribosyltransferase family.</text>
</comment>
<reference key="1">
    <citation type="submission" date="2009-01" db="EMBL/GenBank/DDBJ databases">
        <title>Complete sequence of Geobacter sp. FRC-32.</title>
        <authorList>
            <consortium name="US DOE Joint Genome Institute"/>
            <person name="Lucas S."/>
            <person name="Copeland A."/>
            <person name="Lapidus A."/>
            <person name="Glavina del Rio T."/>
            <person name="Dalin E."/>
            <person name="Tice H."/>
            <person name="Bruce D."/>
            <person name="Goodwin L."/>
            <person name="Pitluck S."/>
            <person name="Saunders E."/>
            <person name="Brettin T."/>
            <person name="Detter J.C."/>
            <person name="Han C."/>
            <person name="Larimer F."/>
            <person name="Land M."/>
            <person name="Hauser L."/>
            <person name="Kyrpides N."/>
            <person name="Ovchinnikova G."/>
            <person name="Kostka J."/>
            <person name="Richardson P."/>
        </authorList>
    </citation>
    <scope>NUCLEOTIDE SEQUENCE [LARGE SCALE GENOMIC DNA]</scope>
    <source>
        <strain>DSM 22248 / JCM 15807 / FRC-32</strain>
    </source>
</reference>
<evidence type="ECO:0000255" key="1">
    <source>
        <dbReference type="HAMAP-Rule" id="MF_00004"/>
    </source>
</evidence>
<accession>B9M4Z1</accession>